<keyword id="KW-0479">Metal-binding</keyword>
<keyword id="KW-0539">Nucleus</keyword>
<keyword id="KW-1185">Reference proteome</keyword>
<keyword id="KW-0678">Repressor</keyword>
<keyword id="KW-0804">Transcription</keyword>
<keyword id="KW-0805">Transcription regulation</keyword>
<keyword id="KW-0862">Zinc</keyword>
<keyword id="KW-0863">Zinc-finger</keyword>
<protein>
    <recommendedName>
        <fullName>Interferon regulatory factor 2-binding protein 2-B</fullName>
        <shortName>IRF-2-binding protein 2-B</shortName>
        <shortName>IRF-2BP2-B</shortName>
    </recommendedName>
</protein>
<accession>Q7T2G1</accession>
<sequence>MSSAAVAASRRQSCYLCDLPRMPWAMIWDFTEPVCRGCVNYEGADRIEFVIETARQLKRAHGFQEGRSPGPVGKPGKDMQSINHAEPGSRPPQPLDRYPLTSDRPPRLGAEYQRQANGIPVPNGFPKPDEPPELNRQSPNPRRTGAIPPNLVPLVNGSMPPVHALNGRSVQMGIPPGALAEHVGKRADDMKDKHRADSMSDPSDGHKRVDEWTQKGKTVREMMTLQTLDSRFKKEHAALPHRMSYESSSGALKTDRGKHSRGIKRKTSPEPDGEGIAVKLNGEGQPWLPSPSEVLKMPSAALPGFAAAPPSTISPHSRTTPPEAATAVQNSQSPMAALILAADNAGTGSPKDAGNQVHSTTTSAAGRRNSGSPQSPSAGQRRPALGATGTAHIPGMDPQAGHPHSIPDSSVPPSSVPLCCTLCHERLEDTHFVQCPSVPSHKFCFPCSRESIKQQGATGEVYCPSGEKCPLVGSNVPWAFMQGEIATILAGDVKVKKERDP</sequence>
<proteinExistence type="evidence at transcript level"/>
<evidence type="ECO:0000250" key="1"/>
<evidence type="ECO:0000256" key="2">
    <source>
        <dbReference type="SAM" id="MobiDB-lite"/>
    </source>
</evidence>
<evidence type="ECO:0000305" key="3"/>
<feature type="chain" id="PRO_0000328735" description="Interferon regulatory factor 2-binding protein 2-B">
    <location>
        <begin position="1"/>
        <end position="501"/>
    </location>
</feature>
<feature type="zinc finger region" description="RING-type; degenerate">
    <location>
        <begin position="420"/>
        <end position="467"/>
    </location>
</feature>
<feature type="region of interest" description="Disordered" evidence="2">
    <location>
        <begin position="60"/>
        <end position="155"/>
    </location>
</feature>
<feature type="region of interest" description="Disordered" evidence="2">
    <location>
        <begin position="240"/>
        <end position="277"/>
    </location>
</feature>
<feature type="region of interest" description="Disordered" evidence="2">
    <location>
        <begin position="306"/>
        <end position="330"/>
    </location>
</feature>
<feature type="region of interest" description="Disordered" evidence="2">
    <location>
        <begin position="344"/>
        <end position="410"/>
    </location>
</feature>
<feature type="region of interest" description="Cys-rich">
    <location>
        <begin position="420"/>
        <end position="467"/>
    </location>
</feature>
<feature type="compositionally biased region" description="Basic residues" evidence="2">
    <location>
        <begin position="256"/>
        <end position="266"/>
    </location>
</feature>
<feature type="compositionally biased region" description="Polar residues" evidence="2">
    <location>
        <begin position="311"/>
        <end position="320"/>
    </location>
</feature>
<feature type="compositionally biased region" description="Polar residues" evidence="2">
    <location>
        <begin position="356"/>
        <end position="378"/>
    </location>
</feature>
<organism>
    <name type="scientific">Danio rerio</name>
    <name type="common">Zebrafish</name>
    <name type="synonym">Brachydanio rerio</name>
    <dbReference type="NCBI Taxonomy" id="7955"/>
    <lineage>
        <taxon>Eukaryota</taxon>
        <taxon>Metazoa</taxon>
        <taxon>Chordata</taxon>
        <taxon>Craniata</taxon>
        <taxon>Vertebrata</taxon>
        <taxon>Euteleostomi</taxon>
        <taxon>Actinopterygii</taxon>
        <taxon>Neopterygii</taxon>
        <taxon>Teleostei</taxon>
        <taxon>Ostariophysi</taxon>
        <taxon>Cypriniformes</taxon>
        <taxon>Danionidae</taxon>
        <taxon>Danioninae</taxon>
        <taxon>Danio</taxon>
    </lineage>
</organism>
<name>I2B2B_DANRE</name>
<reference key="1">
    <citation type="submission" date="2003-07" db="EMBL/GenBank/DDBJ databases">
        <authorList>
            <consortium name="NIH - Zebrafish Gene Collection (ZGC) project"/>
        </authorList>
    </citation>
    <scope>NUCLEOTIDE SEQUENCE [LARGE SCALE MRNA]</scope>
    <source>
        <tissue>Embryo</tissue>
    </source>
</reference>
<comment type="function">
    <text evidence="1">Acts as a transcriptional repressor.</text>
</comment>
<comment type="subcellular location">
    <subcellularLocation>
        <location evidence="1">Nucleus</location>
    </subcellularLocation>
</comment>
<comment type="similarity">
    <text evidence="3">Belongs to the IRF2BP family.</text>
</comment>
<gene>
    <name type="primary">irf2bp2b</name>
    <name type="synonym">irf2bp2</name>
    <name type="ORF">zgc:63864</name>
</gene>
<dbReference type="EMBL" id="BC054562">
    <property type="protein sequence ID" value="AAH54562.1"/>
    <property type="molecule type" value="mRNA"/>
</dbReference>
<dbReference type="RefSeq" id="NP_999917.1">
    <property type="nucleotide sequence ID" value="NM_214752.1"/>
</dbReference>
<dbReference type="SMR" id="Q7T2G1"/>
<dbReference type="FunCoup" id="Q7T2G1">
    <property type="interactions" value="1331"/>
</dbReference>
<dbReference type="STRING" id="7955.ENSDARP00000138346"/>
<dbReference type="PaxDb" id="7955-ENSDARP00000023325"/>
<dbReference type="GeneID" id="406614"/>
<dbReference type="KEGG" id="dre:406614"/>
<dbReference type="AGR" id="ZFIN:ZDB-GENE-040426-2574"/>
<dbReference type="CTD" id="406614"/>
<dbReference type="ZFIN" id="ZDB-GENE-040426-2574">
    <property type="gene designation" value="irf2bp2b"/>
</dbReference>
<dbReference type="eggNOG" id="KOG3579">
    <property type="taxonomic scope" value="Eukaryota"/>
</dbReference>
<dbReference type="InParanoid" id="Q7T2G1"/>
<dbReference type="OrthoDB" id="45007at2759"/>
<dbReference type="PhylomeDB" id="Q7T2G1"/>
<dbReference type="PRO" id="PR:Q7T2G1"/>
<dbReference type="Proteomes" id="UP000000437">
    <property type="component" value="Chromosome 11"/>
</dbReference>
<dbReference type="GO" id="GO:0005634">
    <property type="term" value="C:nucleus"/>
    <property type="evidence" value="ECO:0000318"/>
    <property type="project" value="GO_Central"/>
</dbReference>
<dbReference type="GO" id="GO:0001227">
    <property type="term" value="F:DNA-binding transcription repressor activity, RNA polymerase II-specific"/>
    <property type="evidence" value="ECO:0000314"/>
    <property type="project" value="ZFIN"/>
</dbReference>
<dbReference type="GO" id="GO:0000978">
    <property type="term" value="F:RNA polymerase II cis-regulatory region sequence-specific DNA binding"/>
    <property type="evidence" value="ECO:0000314"/>
    <property type="project" value="ZFIN"/>
</dbReference>
<dbReference type="GO" id="GO:0003714">
    <property type="term" value="F:transcription corepressor activity"/>
    <property type="evidence" value="ECO:0000318"/>
    <property type="project" value="GO_Central"/>
</dbReference>
<dbReference type="GO" id="GO:0008270">
    <property type="term" value="F:zinc ion binding"/>
    <property type="evidence" value="ECO:0007669"/>
    <property type="project" value="UniProtKB-KW"/>
</dbReference>
<dbReference type="GO" id="GO:0045650">
    <property type="term" value="P:negative regulation of macrophage differentiation"/>
    <property type="evidence" value="ECO:0000315"/>
    <property type="project" value="ZFIN"/>
</dbReference>
<dbReference type="GO" id="GO:0006357">
    <property type="term" value="P:regulation of transcription by RNA polymerase II"/>
    <property type="evidence" value="ECO:0000318"/>
    <property type="project" value="GO_Central"/>
</dbReference>
<dbReference type="CDD" id="cd16716">
    <property type="entry name" value="vRING-HC_IRF2BP2"/>
    <property type="match status" value="1"/>
</dbReference>
<dbReference type="FunFam" id="1.10.10.1580:FF:000001">
    <property type="entry name" value="interferon regulatory factor 2-binding protein 2"/>
    <property type="match status" value="1"/>
</dbReference>
<dbReference type="Gene3D" id="1.10.10.1580">
    <property type="entry name" value="Interferon regulatory factor 2-binding protein"/>
    <property type="match status" value="1"/>
</dbReference>
<dbReference type="InterPro" id="IPR044882">
    <property type="entry name" value="I2BP1/2_C3HC4-RING_sf"/>
</dbReference>
<dbReference type="InterPro" id="IPR022750">
    <property type="entry name" value="Interferon_reg_fac2-bd1_2_Znf"/>
</dbReference>
<dbReference type="PANTHER" id="PTHR10816:SF18">
    <property type="entry name" value="INTERFERON REGULATORY FACTOR 2-BINDING PROTEIN 2"/>
    <property type="match status" value="1"/>
</dbReference>
<dbReference type="PANTHER" id="PTHR10816">
    <property type="entry name" value="MYELIN TRANSCRIPTION FACTOR 1-RELATED"/>
    <property type="match status" value="1"/>
</dbReference>
<dbReference type="Pfam" id="PF11261">
    <property type="entry name" value="IRF-2BP1_2"/>
    <property type="match status" value="1"/>
</dbReference>
<dbReference type="Pfam" id="PF25454">
    <property type="entry name" value="zf-C3HC4_IRF-2BP1_2"/>
    <property type="match status" value="1"/>
</dbReference>
<dbReference type="SUPFAM" id="SSF57850">
    <property type="entry name" value="RING/U-box"/>
    <property type="match status" value="1"/>
</dbReference>